<protein>
    <recommendedName>
        <fullName evidence="1">Protein nucleotidyltransferase YdiU</fullName>
        <ecNumber evidence="1">2.7.7.-</ecNumber>
    </recommendedName>
    <alternativeName>
        <fullName evidence="1">Protein adenylyltransferase YdiU</fullName>
        <ecNumber evidence="1">2.7.7.108</ecNumber>
    </alternativeName>
    <alternativeName>
        <fullName evidence="1">Protein uridylyltransferase YdiU</fullName>
        <ecNumber evidence="1">2.7.7.-</ecNumber>
    </alternativeName>
</protein>
<reference key="1">
    <citation type="journal article" date="2008" name="BMC Genomics">
        <title>The missing link: Bordetella petrii is endowed with both the metabolic versatility of environmental bacteria and virulence traits of pathogenic Bordetellae.</title>
        <authorList>
            <person name="Gross R."/>
            <person name="Guzman C.A."/>
            <person name="Sebaihia M."/>
            <person name="Martin dos Santos V.A.P."/>
            <person name="Pieper D.H."/>
            <person name="Koebnik R."/>
            <person name="Lechner M."/>
            <person name="Bartels D."/>
            <person name="Buhrmester J."/>
            <person name="Choudhuri J.V."/>
            <person name="Ebensen T."/>
            <person name="Gaigalat L."/>
            <person name="Herrmann S."/>
            <person name="Khachane A.N."/>
            <person name="Larisch C."/>
            <person name="Link S."/>
            <person name="Linke B."/>
            <person name="Meyer F."/>
            <person name="Mormann S."/>
            <person name="Nakunst D."/>
            <person name="Rueckert C."/>
            <person name="Schneiker-Bekel S."/>
            <person name="Schulze K."/>
            <person name="Voerholter F.-J."/>
            <person name="Yevsa T."/>
            <person name="Engle J.T."/>
            <person name="Goldman W.E."/>
            <person name="Puehler A."/>
            <person name="Goebel U.B."/>
            <person name="Goesmann A."/>
            <person name="Bloecker H."/>
            <person name="Kaiser O."/>
            <person name="Martinez-Arias R."/>
        </authorList>
    </citation>
    <scope>NUCLEOTIDE SEQUENCE [LARGE SCALE GENOMIC DNA]</scope>
    <source>
        <strain>ATCC BAA-461 / DSM 12804 / CCUG 43448</strain>
    </source>
</reference>
<keyword id="KW-0067">ATP-binding</keyword>
<keyword id="KW-0460">Magnesium</keyword>
<keyword id="KW-0464">Manganese</keyword>
<keyword id="KW-0479">Metal-binding</keyword>
<keyword id="KW-0547">Nucleotide-binding</keyword>
<keyword id="KW-0548">Nucleotidyltransferase</keyword>
<keyword id="KW-0808">Transferase</keyword>
<comment type="function">
    <text evidence="1">Nucleotidyltransferase involved in the post-translational modification of proteins. It can catalyze the addition of adenosine monophosphate (AMP) or uridine monophosphate (UMP) to a protein, resulting in modifications known as AMPylation and UMPylation.</text>
</comment>
<comment type="catalytic activity">
    <reaction evidence="1">
        <text>L-seryl-[protein] + ATP = 3-O-(5'-adenylyl)-L-seryl-[protein] + diphosphate</text>
        <dbReference type="Rhea" id="RHEA:58120"/>
        <dbReference type="Rhea" id="RHEA-COMP:9863"/>
        <dbReference type="Rhea" id="RHEA-COMP:15073"/>
        <dbReference type="ChEBI" id="CHEBI:29999"/>
        <dbReference type="ChEBI" id="CHEBI:30616"/>
        <dbReference type="ChEBI" id="CHEBI:33019"/>
        <dbReference type="ChEBI" id="CHEBI:142516"/>
        <dbReference type="EC" id="2.7.7.108"/>
    </reaction>
</comment>
<comment type="catalytic activity">
    <reaction evidence="1">
        <text>L-threonyl-[protein] + ATP = 3-O-(5'-adenylyl)-L-threonyl-[protein] + diphosphate</text>
        <dbReference type="Rhea" id="RHEA:54292"/>
        <dbReference type="Rhea" id="RHEA-COMP:11060"/>
        <dbReference type="Rhea" id="RHEA-COMP:13847"/>
        <dbReference type="ChEBI" id="CHEBI:30013"/>
        <dbReference type="ChEBI" id="CHEBI:30616"/>
        <dbReference type="ChEBI" id="CHEBI:33019"/>
        <dbReference type="ChEBI" id="CHEBI:138113"/>
        <dbReference type="EC" id="2.7.7.108"/>
    </reaction>
</comment>
<comment type="catalytic activity">
    <reaction evidence="1">
        <text>L-tyrosyl-[protein] + ATP = O-(5'-adenylyl)-L-tyrosyl-[protein] + diphosphate</text>
        <dbReference type="Rhea" id="RHEA:54288"/>
        <dbReference type="Rhea" id="RHEA-COMP:10136"/>
        <dbReference type="Rhea" id="RHEA-COMP:13846"/>
        <dbReference type="ChEBI" id="CHEBI:30616"/>
        <dbReference type="ChEBI" id="CHEBI:33019"/>
        <dbReference type="ChEBI" id="CHEBI:46858"/>
        <dbReference type="ChEBI" id="CHEBI:83624"/>
        <dbReference type="EC" id="2.7.7.108"/>
    </reaction>
</comment>
<comment type="catalytic activity">
    <reaction evidence="1">
        <text>L-histidyl-[protein] + UTP = N(tele)-(5'-uridylyl)-L-histidyl-[protein] + diphosphate</text>
        <dbReference type="Rhea" id="RHEA:83891"/>
        <dbReference type="Rhea" id="RHEA-COMP:9745"/>
        <dbReference type="Rhea" id="RHEA-COMP:20239"/>
        <dbReference type="ChEBI" id="CHEBI:29979"/>
        <dbReference type="ChEBI" id="CHEBI:33019"/>
        <dbReference type="ChEBI" id="CHEBI:46398"/>
        <dbReference type="ChEBI" id="CHEBI:233474"/>
    </reaction>
</comment>
<comment type="catalytic activity">
    <reaction evidence="1">
        <text>L-seryl-[protein] + UTP = O-(5'-uridylyl)-L-seryl-[protein] + diphosphate</text>
        <dbReference type="Rhea" id="RHEA:64604"/>
        <dbReference type="Rhea" id="RHEA-COMP:9863"/>
        <dbReference type="Rhea" id="RHEA-COMP:16635"/>
        <dbReference type="ChEBI" id="CHEBI:29999"/>
        <dbReference type="ChEBI" id="CHEBI:33019"/>
        <dbReference type="ChEBI" id="CHEBI:46398"/>
        <dbReference type="ChEBI" id="CHEBI:156051"/>
    </reaction>
</comment>
<comment type="catalytic activity">
    <reaction evidence="1">
        <text>L-tyrosyl-[protein] + UTP = O-(5'-uridylyl)-L-tyrosyl-[protein] + diphosphate</text>
        <dbReference type="Rhea" id="RHEA:83887"/>
        <dbReference type="Rhea" id="RHEA-COMP:10136"/>
        <dbReference type="Rhea" id="RHEA-COMP:20238"/>
        <dbReference type="ChEBI" id="CHEBI:33019"/>
        <dbReference type="ChEBI" id="CHEBI:46398"/>
        <dbReference type="ChEBI" id="CHEBI:46858"/>
        <dbReference type="ChEBI" id="CHEBI:90602"/>
    </reaction>
</comment>
<comment type="cofactor">
    <cofactor evidence="1">
        <name>Mg(2+)</name>
        <dbReference type="ChEBI" id="CHEBI:18420"/>
    </cofactor>
    <cofactor evidence="1">
        <name>Mn(2+)</name>
        <dbReference type="ChEBI" id="CHEBI:29035"/>
    </cofactor>
</comment>
<comment type="similarity">
    <text evidence="1">Belongs to the SELO family.</text>
</comment>
<evidence type="ECO:0000255" key="1">
    <source>
        <dbReference type="HAMAP-Rule" id="MF_00692"/>
    </source>
</evidence>
<organism>
    <name type="scientific">Bordetella petrii (strain ATCC BAA-461 / DSM 12804 / CCUG 43448)</name>
    <dbReference type="NCBI Taxonomy" id="340100"/>
    <lineage>
        <taxon>Bacteria</taxon>
        <taxon>Pseudomonadati</taxon>
        <taxon>Pseudomonadota</taxon>
        <taxon>Betaproteobacteria</taxon>
        <taxon>Burkholderiales</taxon>
        <taxon>Alcaligenaceae</taxon>
        <taxon>Bordetella</taxon>
    </lineage>
</organism>
<name>SELO_BORPD</name>
<proteinExistence type="inferred from homology"/>
<feature type="chain" id="PRO_1000132091" description="Protein nucleotidyltransferase YdiU">
    <location>
        <begin position="1"/>
        <end position="497"/>
    </location>
</feature>
<feature type="active site" description="Proton acceptor" evidence="1">
    <location>
        <position position="261"/>
    </location>
</feature>
<feature type="binding site" evidence="1">
    <location>
        <position position="92"/>
    </location>
    <ligand>
        <name>ATP</name>
        <dbReference type="ChEBI" id="CHEBI:30616"/>
    </ligand>
</feature>
<feature type="binding site" evidence="1">
    <location>
        <position position="94"/>
    </location>
    <ligand>
        <name>ATP</name>
        <dbReference type="ChEBI" id="CHEBI:30616"/>
    </ligand>
</feature>
<feature type="binding site" evidence="1">
    <location>
        <position position="95"/>
    </location>
    <ligand>
        <name>ATP</name>
        <dbReference type="ChEBI" id="CHEBI:30616"/>
    </ligand>
</feature>
<feature type="binding site" evidence="1">
    <location>
        <position position="114"/>
    </location>
    <ligand>
        <name>ATP</name>
        <dbReference type="ChEBI" id="CHEBI:30616"/>
    </ligand>
</feature>
<feature type="binding site" evidence="1">
    <location>
        <position position="126"/>
    </location>
    <ligand>
        <name>ATP</name>
        <dbReference type="ChEBI" id="CHEBI:30616"/>
    </ligand>
</feature>
<feature type="binding site" evidence="1">
    <location>
        <position position="127"/>
    </location>
    <ligand>
        <name>ATP</name>
        <dbReference type="ChEBI" id="CHEBI:30616"/>
    </ligand>
</feature>
<feature type="binding site" evidence="1">
    <location>
        <position position="177"/>
    </location>
    <ligand>
        <name>ATP</name>
        <dbReference type="ChEBI" id="CHEBI:30616"/>
    </ligand>
</feature>
<feature type="binding site" evidence="1">
    <location>
        <position position="184"/>
    </location>
    <ligand>
        <name>ATP</name>
        <dbReference type="ChEBI" id="CHEBI:30616"/>
    </ligand>
</feature>
<feature type="binding site" evidence="1">
    <location>
        <position position="262"/>
    </location>
    <ligand>
        <name>Mg(2+)</name>
        <dbReference type="ChEBI" id="CHEBI:18420"/>
    </ligand>
</feature>
<feature type="binding site" evidence="1">
    <location>
        <position position="271"/>
    </location>
    <ligand>
        <name>ATP</name>
        <dbReference type="ChEBI" id="CHEBI:30616"/>
    </ligand>
</feature>
<feature type="binding site" evidence="1">
    <location>
        <position position="271"/>
    </location>
    <ligand>
        <name>Mg(2+)</name>
        <dbReference type="ChEBI" id="CHEBI:18420"/>
    </ligand>
</feature>
<accession>A9IT50</accession>
<gene>
    <name evidence="1" type="primary">ydiU</name>
    <name evidence="1" type="synonym">selO</name>
    <name type="ordered locus">Bpet3040</name>
</gene>
<dbReference type="EC" id="2.7.7.-" evidence="1"/>
<dbReference type="EC" id="2.7.7.108" evidence="1"/>
<dbReference type="EMBL" id="AM902716">
    <property type="protein sequence ID" value="CAP43382.1"/>
    <property type="molecule type" value="Genomic_DNA"/>
</dbReference>
<dbReference type="SMR" id="A9IT50"/>
<dbReference type="STRING" id="94624.Bpet3040"/>
<dbReference type="KEGG" id="bpt:Bpet3040"/>
<dbReference type="eggNOG" id="COG0397">
    <property type="taxonomic scope" value="Bacteria"/>
</dbReference>
<dbReference type="Proteomes" id="UP000001225">
    <property type="component" value="Chromosome"/>
</dbReference>
<dbReference type="GO" id="GO:0070733">
    <property type="term" value="F:AMPylase activity"/>
    <property type="evidence" value="ECO:0007669"/>
    <property type="project" value="RHEA"/>
</dbReference>
<dbReference type="GO" id="GO:0005524">
    <property type="term" value="F:ATP binding"/>
    <property type="evidence" value="ECO:0007669"/>
    <property type="project" value="UniProtKB-UniRule"/>
</dbReference>
<dbReference type="GO" id="GO:0000287">
    <property type="term" value="F:magnesium ion binding"/>
    <property type="evidence" value="ECO:0007669"/>
    <property type="project" value="UniProtKB-UniRule"/>
</dbReference>
<dbReference type="HAMAP" id="MF_00692">
    <property type="entry name" value="YdiU_SelO"/>
    <property type="match status" value="1"/>
</dbReference>
<dbReference type="InterPro" id="IPR003846">
    <property type="entry name" value="SelO"/>
</dbReference>
<dbReference type="NCBIfam" id="NF000658">
    <property type="entry name" value="PRK00029.1"/>
    <property type="match status" value="1"/>
</dbReference>
<dbReference type="PANTHER" id="PTHR32057">
    <property type="entry name" value="PROTEIN ADENYLYLTRANSFERASE SELO, MITOCHONDRIAL"/>
    <property type="match status" value="1"/>
</dbReference>
<dbReference type="PANTHER" id="PTHR32057:SF14">
    <property type="entry name" value="PROTEIN ADENYLYLTRANSFERASE SELO, MITOCHONDRIAL"/>
    <property type="match status" value="1"/>
</dbReference>
<dbReference type="Pfam" id="PF02696">
    <property type="entry name" value="SelO"/>
    <property type="match status" value="1"/>
</dbReference>
<sequence>MTAATLAQLRVDNSFAALPAAFYTRLAPQPLTAPRLLHANEQAAALIGLSADALRSDEFLRVFSGQQPLPGGQTLAAVYSGHQFGVWAGQLGDGRAHLLGEVAGPDGNWELQLKGAGMTPYSRMGDGRAVLRSSVREYLASEAMHGLGIPTTRSLALVVSDDPVMRETVETAAIVTRMSPSFVRFGSFEHWSSRRQPDELRILADYVIDKFYPECREPRPGEAPGPDGALLRMLAEVTRRTAELMAGWQAVGFCHGVMNTDNMSILGLTLDYGPYGFMDAFRLDHICNHSDSEGRYAWNRQPSVALWNLYRLGGSLHALVPDVEALRAVLDSYEVIFTRAFHQRMAAKLGLREWRADDEPLLDDLLRLMHDNRADFTLTFRRLADAVRGRPQGLQDLFIDRDAALAWFERLAARHAQEGAGNDAQARAAGMDAVNPLYVLRNHLAEQAIRAAKAGDAGEIDTLLALLRDPCVEQPGRDAYAALPPDWAGGIEVSCSS</sequence>